<evidence type="ECO:0000255" key="1">
    <source>
        <dbReference type="HAMAP-Rule" id="MF_00315"/>
    </source>
</evidence>
<dbReference type="EC" id="2.2.1.7" evidence="1"/>
<dbReference type="EMBL" id="CP000325">
    <property type="protein sequence ID" value="ABL05509.1"/>
    <property type="molecule type" value="Genomic_DNA"/>
</dbReference>
<dbReference type="RefSeq" id="WP_011741117.1">
    <property type="nucleotide sequence ID" value="NC_008611.1"/>
</dbReference>
<dbReference type="SMR" id="A0PT40"/>
<dbReference type="KEGG" id="mul:MUL_3319"/>
<dbReference type="eggNOG" id="COG1154">
    <property type="taxonomic scope" value="Bacteria"/>
</dbReference>
<dbReference type="HOGENOM" id="CLU_009227_1_4_11"/>
<dbReference type="UniPathway" id="UPA00064">
    <property type="reaction ID" value="UER00091"/>
</dbReference>
<dbReference type="Proteomes" id="UP000000765">
    <property type="component" value="Chromosome"/>
</dbReference>
<dbReference type="GO" id="GO:0005829">
    <property type="term" value="C:cytosol"/>
    <property type="evidence" value="ECO:0007669"/>
    <property type="project" value="TreeGrafter"/>
</dbReference>
<dbReference type="GO" id="GO:0008661">
    <property type="term" value="F:1-deoxy-D-xylulose-5-phosphate synthase activity"/>
    <property type="evidence" value="ECO:0007669"/>
    <property type="project" value="UniProtKB-UniRule"/>
</dbReference>
<dbReference type="GO" id="GO:0000287">
    <property type="term" value="F:magnesium ion binding"/>
    <property type="evidence" value="ECO:0007669"/>
    <property type="project" value="UniProtKB-UniRule"/>
</dbReference>
<dbReference type="GO" id="GO:0030976">
    <property type="term" value="F:thiamine pyrophosphate binding"/>
    <property type="evidence" value="ECO:0007669"/>
    <property type="project" value="UniProtKB-UniRule"/>
</dbReference>
<dbReference type="GO" id="GO:0052865">
    <property type="term" value="P:1-deoxy-D-xylulose 5-phosphate biosynthetic process"/>
    <property type="evidence" value="ECO:0007669"/>
    <property type="project" value="UniProtKB-UniPathway"/>
</dbReference>
<dbReference type="GO" id="GO:0019288">
    <property type="term" value="P:isopentenyl diphosphate biosynthetic process, methylerythritol 4-phosphate pathway"/>
    <property type="evidence" value="ECO:0007669"/>
    <property type="project" value="TreeGrafter"/>
</dbReference>
<dbReference type="GO" id="GO:0016114">
    <property type="term" value="P:terpenoid biosynthetic process"/>
    <property type="evidence" value="ECO:0007669"/>
    <property type="project" value="UniProtKB-UniRule"/>
</dbReference>
<dbReference type="GO" id="GO:0009228">
    <property type="term" value="P:thiamine biosynthetic process"/>
    <property type="evidence" value="ECO:0007669"/>
    <property type="project" value="UniProtKB-UniRule"/>
</dbReference>
<dbReference type="CDD" id="cd02007">
    <property type="entry name" value="TPP_DXS"/>
    <property type="match status" value="1"/>
</dbReference>
<dbReference type="CDD" id="cd07033">
    <property type="entry name" value="TPP_PYR_DXS_TK_like"/>
    <property type="match status" value="1"/>
</dbReference>
<dbReference type="FunFam" id="3.40.50.920:FF:000002">
    <property type="entry name" value="1-deoxy-D-xylulose-5-phosphate synthase"/>
    <property type="match status" value="1"/>
</dbReference>
<dbReference type="FunFam" id="3.40.50.970:FF:000005">
    <property type="entry name" value="1-deoxy-D-xylulose-5-phosphate synthase"/>
    <property type="match status" value="1"/>
</dbReference>
<dbReference type="Gene3D" id="3.40.50.920">
    <property type="match status" value="1"/>
</dbReference>
<dbReference type="Gene3D" id="3.40.50.970">
    <property type="match status" value="2"/>
</dbReference>
<dbReference type="HAMAP" id="MF_00315">
    <property type="entry name" value="DXP_synth"/>
    <property type="match status" value="1"/>
</dbReference>
<dbReference type="InterPro" id="IPR005477">
    <property type="entry name" value="Dxylulose-5-P_synthase"/>
</dbReference>
<dbReference type="InterPro" id="IPR029061">
    <property type="entry name" value="THDP-binding"/>
</dbReference>
<dbReference type="InterPro" id="IPR009014">
    <property type="entry name" value="Transketo_C/PFOR_II"/>
</dbReference>
<dbReference type="InterPro" id="IPR005475">
    <property type="entry name" value="Transketolase-like_Pyr-bd"/>
</dbReference>
<dbReference type="InterPro" id="IPR020826">
    <property type="entry name" value="Transketolase_BS"/>
</dbReference>
<dbReference type="InterPro" id="IPR033248">
    <property type="entry name" value="Transketolase_C"/>
</dbReference>
<dbReference type="InterPro" id="IPR049557">
    <property type="entry name" value="Transketolase_CS"/>
</dbReference>
<dbReference type="NCBIfam" id="TIGR00204">
    <property type="entry name" value="dxs"/>
    <property type="match status" value="1"/>
</dbReference>
<dbReference type="NCBIfam" id="NF003933">
    <property type="entry name" value="PRK05444.2-2"/>
    <property type="match status" value="1"/>
</dbReference>
<dbReference type="PANTHER" id="PTHR43322">
    <property type="entry name" value="1-D-DEOXYXYLULOSE 5-PHOSPHATE SYNTHASE-RELATED"/>
    <property type="match status" value="1"/>
</dbReference>
<dbReference type="PANTHER" id="PTHR43322:SF5">
    <property type="entry name" value="1-DEOXY-D-XYLULOSE-5-PHOSPHATE SYNTHASE, CHLOROPLASTIC"/>
    <property type="match status" value="1"/>
</dbReference>
<dbReference type="Pfam" id="PF13292">
    <property type="entry name" value="DXP_synthase_N"/>
    <property type="match status" value="1"/>
</dbReference>
<dbReference type="Pfam" id="PF02779">
    <property type="entry name" value="Transket_pyr"/>
    <property type="match status" value="1"/>
</dbReference>
<dbReference type="Pfam" id="PF02780">
    <property type="entry name" value="Transketolase_C"/>
    <property type="match status" value="1"/>
</dbReference>
<dbReference type="SMART" id="SM00861">
    <property type="entry name" value="Transket_pyr"/>
    <property type="match status" value="1"/>
</dbReference>
<dbReference type="SUPFAM" id="SSF52518">
    <property type="entry name" value="Thiamin diphosphate-binding fold (THDP-binding)"/>
    <property type="match status" value="2"/>
</dbReference>
<dbReference type="SUPFAM" id="SSF52922">
    <property type="entry name" value="TK C-terminal domain-like"/>
    <property type="match status" value="1"/>
</dbReference>
<dbReference type="PROSITE" id="PS00801">
    <property type="entry name" value="TRANSKETOLASE_1"/>
    <property type="match status" value="1"/>
</dbReference>
<dbReference type="PROSITE" id="PS00802">
    <property type="entry name" value="TRANSKETOLASE_2"/>
    <property type="match status" value="1"/>
</dbReference>
<proteinExistence type="inferred from homology"/>
<reference key="1">
    <citation type="journal article" date="2007" name="Genome Res.">
        <title>Reductive evolution and niche adaptation inferred from the genome of Mycobacterium ulcerans, the causative agent of Buruli ulcer.</title>
        <authorList>
            <person name="Stinear T.P."/>
            <person name="Seemann T."/>
            <person name="Pidot S."/>
            <person name="Frigui W."/>
            <person name="Reysset G."/>
            <person name="Garnier T."/>
            <person name="Meurice G."/>
            <person name="Simon D."/>
            <person name="Bouchier C."/>
            <person name="Ma L."/>
            <person name="Tichit M."/>
            <person name="Porter J.L."/>
            <person name="Ryan J."/>
            <person name="Johnson P.D.R."/>
            <person name="Davies J.K."/>
            <person name="Jenkin G.A."/>
            <person name="Small P.L.C."/>
            <person name="Jones L.M."/>
            <person name="Tekaia F."/>
            <person name="Laval F."/>
            <person name="Daffe M."/>
            <person name="Parkhill J."/>
            <person name="Cole S.T."/>
        </authorList>
    </citation>
    <scope>NUCLEOTIDE SEQUENCE [LARGE SCALE GENOMIC DNA]</scope>
    <source>
        <strain>Agy99</strain>
    </source>
</reference>
<accession>A0PT40</accession>
<gene>
    <name evidence="1" type="primary">dxs</name>
    <name type="ordered locus">MUL_3319</name>
</gene>
<name>DXS_MYCUA</name>
<keyword id="KW-0414">Isoprene biosynthesis</keyword>
<keyword id="KW-0460">Magnesium</keyword>
<keyword id="KW-0479">Metal-binding</keyword>
<keyword id="KW-0784">Thiamine biosynthesis</keyword>
<keyword id="KW-0786">Thiamine pyrophosphate</keyword>
<keyword id="KW-0808">Transferase</keyword>
<protein>
    <recommendedName>
        <fullName evidence="1">1-deoxy-D-xylulose-5-phosphate synthase</fullName>
        <ecNumber evidence="1">2.2.1.7</ecNumber>
    </recommendedName>
    <alternativeName>
        <fullName evidence="1">1-deoxyxylulose-5-phosphate synthase</fullName>
        <shortName evidence="1">DXP synthase</shortName>
        <shortName evidence="1">DXPS</shortName>
    </alternativeName>
</protein>
<feature type="chain" id="PRO_1000019046" description="1-deoxy-D-xylulose-5-phosphate synthase">
    <location>
        <begin position="1"/>
        <end position="637"/>
    </location>
</feature>
<feature type="binding site" evidence="1">
    <location>
        <position position="71"/>
    </location>
    <ligand>
        <name>thiamine diphosphate</name>
        <dbReference type="ChEBI" id="CHEBI:58937"/>
    </ligand>
</feature>
<feature type="binding site" evidence="1">
    <location>
        <begin position="112"/>
        <end position="114"/>
    </location>
    <ligand>
        <name>thiamine diphosphate</name>
        <dbReference type="ChEBI" id="CHEBI:58937"/>
    </ligand>
</feature>
<feature type="binding site" evidence="1">
    <location>
        <position position="144"/>
    </location>
    <ligand>
        <name>Mg(2+)</name>
        <dbReference type="ChEBI" id="CHEBI:18420"/>
    </ligand>
</feature>
<feature type="binding site" evidence="1">
    <location>
        <begin position="145"/>
        <end position="146"/>
    </location>
    <ligand>
        <name>thiamine diphosphate</name>
        <dbReference type="ChEBI" id="CHEBI:58937"/>
    </ligand>
</feature>
<feature type="binding site" evidence="1">
    <location>
        <position position="173"/>
    </location>
    <ligand>
        <name>Mg(2+)</name>
        <dbReference type="ChEBI" id="CHEBI:18420"/>
    </ligand>
</feature>
<feature type="binding site" evidence="1">
    <location>
        <position position="173"/>
    </location>
    <ligand>
        <name>thiamine diphosphate</name>
        <dbReference type="ChEBI" id="CHEBI:58937"/>
    </ligand>
</feature>
<feature type="binding site" evidence="1">
    <location>
        <position position="284"/>
    </location>
    <ligand>
        <name>thiamine diphosphate</name>
        <dbReference type="ChEBI" id="CHEBI:58937"/>
    </ligand>
</feature>
<feature type="binding site" evidence="1">
    <location>
        <position position="365"/>
    </location>
    <ligand>
        <name>thiamine diphosphate</name>
        <dbReference type="ChEBI" id="CHEBI:58937"/>
    </ligand>
</feature>
<sequence>MLQQIRGPADLQHLSQAQLRELAQEIREFLVHKVAATGGHLGPNLGVVELTLALHRVFDSPHDPIIFDTGHQTYVHKMLTGRAQDFESLRKKGGLSGYPCRAESEHDWVESSHASAALSYADGLSKAFELSGLRNRHVVAVVGDGALTGGMCWEALNNIAASHRPVVIVVNDNGRSYAPTIGGVADHLAKLRLQPAYEQVLEKGRDVVRAVPLVGEVCYHFMHSVKAGIKDSLSPQLLFTDLGLKYVGPVDGHDERAVEVALRSARGFGGPVIVHVVTRKGMGYGPAEADVAEQMHSTVPIDPATGQATKLAGPGWTTTFADALIEYAGKRRDIVAITAAMPGPTGLTAFGQQFPDRLFDVGIAEQHAMTSAAGLAMGGMHPVVAIYSTFLNRAFDQIMMDVALHQLPVTMVLDRAGITGSDGPSHNGMWDLSMLGIIPGIRVAAPRDATRLREELGEALDVDDGPTALRFPKGDVGEDIPALERRDGMDVLAVPASGLNHDVLLIAVGALASMALAVAKRLHNQGIGVTVIDPRWVLPVADGIGDLAVAHKLVVTLEDNGVNGGVGSAVSAALRRAEIGVHCRDVGLPQQFFEHASRGELLADLRLTDQDVARRVTGWVAALGACVSEAEIKEHLD</sequence>
<organism>
    <name type="scientific">Mycobacterium ulcerans (strain Agy99)</name>
    <dbReference type="NCBI Taxonomy" id="362242"/>
    <lineage>
        <taxon>Bacteria</taxon>
        <taxon>Bacillati</taxon>
        <taxon>Actinomycetota</taxon>
        <taxon>Actinomycetes</taxon>
        <taxon>Mycobacteriales</taxon>
        <taxon>Mycobacteriaceae</taxon>
        <taxon>Mycobacterium</taxon>
        <taxon>Mycobacterium ulcerans group</taxon>
    </lineage>
</organism>
<comment type="function">
    <text evidence="1">Catalyzes the acyloin condensation reaction between C atoms 2 and 3 of pyruvate and glyceraldehyde 3-phosphate to yield 1-deoxy-D-xylulose-5-phosphate (DXP).</text>
</comment>
<comment type="catalytic activity">
    <reaction evidence="1">
        <text>D-glyceraldehyde 3-phosphate + pyruvate + H(+) = 1-deoxy-D-xylulose 5-phosphate + CO2</text>
        <dbReference type="Rhea" id="RHEA:12605"/>
        <dbReference type="ChEBI" id="CHEBI:15361"/>
        <dbReference type="ChEBI" id="CHEBI:15378"/>
        <dbReference type="ChEBI" id="CHEBI:16526"/>
        <dbReference type="ChEBI" id="CHEBI:57792"/>
        <dbReference type="ChEBI" id="CHEBI:59776"/>
        <dbReference type="EC" id="2.2.1.7"/>
    </reaction>
</comment>
<comment type="cofactor">
    <cofactor evidence="1">
        <name>Mg(2+)</name>
        <dbReference type="ChEBI" id="CHEBI:18420"/>
    </cofactor>
    <text evidence="1">Binds 1 Mg(2+) ion per subunit.</text>
</comment>
<comment type="cofactor">
    <cofactor evidence="1">
        <name>thiamine diphosphate</name>
        <dbReference type="ChEBI" id="CHEBI:58937"/>
    </cofactor>
    <text evidence="1">Binds 1 thiamine pyrophosphate per subunit.</text>
</comment>
<comment type="pathway">
    <text evidence="1">Metabolic intermediate biosynthesis; 1-deoxy-D-xylulose 5-phosphate biosynthesis; 1-deoxy-D-xylulose 5-phosphate from D-glyceraldehyde 3-phosphate and pyruvate: step 1/1.</text>
</comment>
<comment type="subunit">
    <text evidence="1">Homodimer.</text>
</comment>
<comment type="similarity">
    <text evidence="1">Belongs to the transketolase family. DXPS subfamily.</text>
</comment>